<organism>
    <name type="scientific">Bos taurus</name>
    <name type="common">Bovine</name>
    <dbReference type="NCBI Taxonomy" id="9913"/>
    <lineage>
        <taxon>Eukaryota</taxon>
        <taxon>Metazoa</taxon>
        <taxon>Chordata</taxon>
        <taxon>Craniata</taxon>
        <taxon>Vertebrata</taxon>
        <taxon>Euteleostomi</taxon>
        <taxon>Mammalia</taxon>
        <taxon>Eutheria</taxon>
        <taxon>Laurasiatheria</taxon>
        <taxon>Artiodactyla</taxon>
        <taxon>Ruminantia</taxon>
        <taxon>Pecora</taxon>
        <taxon>Bovidae</taxon>
        <taxon>Bovinae</taxon>
        <taxon>Bos</taxon>
    </lineage>
</organism>
<keyword id="KW-0002">3D-structure</keyword>
<keyword id="KW-0007">Acetylation</keyword>
<keyword id="KW-0963">Cytoplasm</keyword>
<keyword id="KW-0206">Cytoskeleton</keyword>
<keyword id="KW-0342">GTP-binding</keyword>
<keyword id="KW-0378">Hydrolase</keyword>
<keyword id="KW-0460">Magnesium</keyword>
<keyword id="KW-0479">Metal-binding</keyword>
<keyword id="KW-0488">Methylation</keyword>
<keyword id="KW-0493">Microtubule</keyword>
<keyword id="KW-0944">Nitration</keyword>
<keyword id="KW-0547">Nucleotide-binding</keyword>
<keyword id="KW-0597">Phosphoprotein</keyword>
<keyword id="KW-1185">Reference proteome</keyword>
<protein>
    <recommendedName>
        <fullName>Tubulin alpha-1C chain</fullName>
        <ecNumber evidence="2">3.6.5.-</ecNumber>
    </recommendedName>
    <component>
        <recommendedName>
            <fullName>Detyrosinated tubulin alpha-1C chain</fullName>
        </recommendedName>
    </component>
</protein>
<reference key="1">
    <citation type="submission" date="2005-08" db="EMBL/GenBank/DDBJ databases">
        <authorList>
            <consortium name="NIH - Mammalian Gene Collection (MGC) project"/>
        </authorList>
    </citation>
    <scope>NUCLEOTIDE SEQUENCE [LARGE SCALE MRNA]</scope>
    <source>
        <strain>Crossbred X Angus</strain>
        <tissue>Ileum</tissue>
    </source>
</reference>
<reference key="2">
    <citation type="journal article" date="1984" name="Nature">
        <title>Dynamic instability of microtubule growth.</title>
        <authorList>
            <person name="Mitchison T."/>
            <person name="Kirschner M."/>
        </authorList>
    </citation>
    <scope>FUNCTION</scope>
    <scope>SUBUNIT</scope>
    <scope>SUBCELLULAR LOCATION</scope>
</reference>
<reference key="3">
    <citation type="journal article" date="1990" name="Biochemistry">
        <title>Role of GTP hydrolysis in microtubule polymerization: evidence for a coupled hydrolysis mechanism.</title>
        <authorList>
            <person name="Stewart R.J."/>
            <person name="Farrell K.W."/>
            <person name="Wilson L."/>
        </authorList>
    </citation>
    <scope>FUNCTION</scope>
    <scope>SUBUNIT</scope>
    <scope>SUBCELLULAR LOCATION</scope>
</reference>
<reference key="4">
    <citation type="journal article" date="1994" name="Curr. Biol.">
        <title>The minimum GTP cap required to stabilize microtubules.</title>
        <authorList>
            <person name="Drechsel D.N."/>
            <person name="Kirschner M.W."/>
        </authorList>
    </citation>
    <scope>FUNCTION</scope>
    <scope>SUBUNIT</scope>
    <scope>SUBCELLULAR LOCATION</scope>
</reference>
<accession>Q3ZCJ7</accession>
<name>TBA1C_BOVIN</name>
<gene>
    <name type="primary">TUBA1C</name>
</gene>
<evidence type="ECO:0000250" key="1"/>
<evidence type="ECO:0000250" key="2">
    <source>
        <dbReference type="UniProtKB" id="P68363"/>
    </source>
</evidence>
<evidence type="ECO:0000250" key="3">
    <source>
        <dbReference type="UniProtKB" id="P68369"/>
    </source>
</evidence>
<evidence type="ECO:0000250" key="4">
    <source>
        <dbReference type="UniProtKB" id="P68373"/>
    </source>
</evidence>
<evidence type="ECO:0000250" key="5">
    <source>
        <dbReference type="UniProtKB" id="Q71U36"/>
    </source>
</evidence>
<evidence type="ECO:0000250" key="6">
    <source>
        <dbReference type="UniProtKB" id="Q9BQE3"/>
    </source>
</evidence>
<evidence type="ECO:0000256" key="7">
    <source>
        <dbReference type="SAM" id="MobiDB-lite"/>
    </source>
</evidence>
<evidence type="ECO:0000269" key="8">
    <source>
    </source>
</evidence>
<evidence type="ECO:0000269" key="9">
    <source>
    </source>
</evidence>
<evidence type="ECO:0000269" key="10">
    <source>
    </source>
</evidence>
<evidence type="ECO:0000305" key="11"/>
<feature type="chain" id="PRO_0000288842" description="Tubulin alpha-1C chain">
    <location>
        <begin position="1"/>
        <end position="449"/>
    </location>
</feature>
<feature type="chain" id="PRO_0000437392" description="Detyrosinated tubulin alpha-1C chain" evidence="6">
    <location>
        <begin position="1"/>
        <end position="448"/>
    </location>
</feature>
<feature type="region of interest" description="Disordered" evidence="7">
    <location>
        <begin position="429"/>
        <end position="449"/>
    </location>
</feature>
<feature type="short sequence motif" description="MREC motif" evidence="2">
    <location>
        <begin position="1"/>
        <end position="4"/>
    </location>
</feature>
<feature type="compositionally biased region" description="Acidic residues" evidence="7">
    <location>
        <begin position="431"/>
        <end position="449"/>
    </location>
</feature>
<feature type="active site" evidence="2">
    <location>
        <position position="254"/>
    </location>
</feature>
<feature type="binding site" evidence="2">
    <location>
        <position position="11"/>
    </location>
    <ligand>
        <name>GTP</name>
        <dbReference type="ChEBI" id="CHEBI:37565"/>
    </ligand>
</feature>
<feature type="binding site" evidence="2">
    <location>
        <position position="71"/>
    </location>
    <ligand>
        <name>GTP</name>
        <dbReference type="ChEBI" id="CHEBI:37565"/>
    </ligand>
</feature>
<feature type="binding site" evidence="2">
    <location>
        <position position="71"/>
    </location>
    <ligand>
        <name>Mg(2+)</name>
        <dbReference type="ChEBI" id="CHEBI:18420"/>
    </ligand>
</feature>
<feature type="binding site" evidence="2">
    <location>
        <position position="140"/>
    </location>
    <ligand>
        <name>GTP</name>
        <dbReference type="ChEBI" id="CHEBI:37565"/>
    </ligand>
</feature>
<feature type="binding site" evidence="2">
    <location>
        <position position="144"/>
    </location>
    <ligand>
        <name>GTP</name>
        <dbReference type="ChEBI" id="CHEBI:37565"/>
    </ligand>
</feature>
<feature type="binding site" evidence="2">
    <location>
        <position position="145"/>
    </location>
    <ligand>
        <name>GTP</name>
        <dbReference type="ChEBI" id="CHEBI:37565"/>
    </ligand>
</feature>
<feature type="binding site" evidence="2">
    <location>
        <position position="179"/>
    </location>
    <ligand>
        <name>GTP</name>
        <dbReference type="ChEBI" id="CHEBI:37565"/>
    </ligand>
</feature>
<feature type="binding site" evidence="2">
    <location>
        <position position="206"/>
    </location>
    <ligand>
        <name>GTP</name>
        <dbReference type="ChEBI" id="CHEBI:37565"/>
    </ligand>
</feature>
<feature type="binding site" evidence="2">
    <location>
        <position position="228"/>
    </location>
    <ligand>
        <name>GTP</name>
        <dbReference type="ChEBI" id="CHEBI:37565"/>
    </ligand>
</feature>
<feature type="site" description="Involved in polymerization" evidence="1">
    <location>
        <position position="449"/>
    </location>
</feature>
<feature type="modified residue" description="N6-acetyllysine" evidence="6">
    <location>
        <position position="40"/>
    </location>
</feature>
<feature type="modified residue" description="3'-nitrotyrosine" evidence="4">
    <location>
        <position position="282"/>
    </location>
</feature>
<feature type="modified residue" description="Phosphotyrosine" evidence="6">
    <location>
        <position position="432"/>
    </location>
</feature>
<feature type="modified residue" description="Phosphoserine" evidence="6">
    <location>
        <position position="439"/>
    </location>
</feature>
<feature type="modified residue" description="3'-nitrotyrosine" evidence="5">
    <location>
        <position position="449"/>
    </location>
</feature>
<comment type="function">
    <text evidence="8 9 10">Tubulin is the major constituent of microtubules, a cylinder consisting of laterally associated linear protofilaments composed of alpha- and beta-tubulin heterodimers (PubMed:2207090, PubMed:6504138, PubMed:7704569). Microtubules grow by the addition of GTP-tubulin dimers to the microtubule end, where a stabilizing cap forms. Below the cap, tubulin dimers are in GDP-bound state, owing to GTPase activity of alpha-tubulin (PubMed:2207090, PubMed:6504138, PubMed:7704569).</text>
</comment>
<comment type="catalytic activity">
    <reaction evidence="2">
        <text>GTP + H2O = GDP + phosphate + H(+)</text>
        <dbReference type="Rhea" id="RHEA:19669"/>
        <dbReference type="ChEBI" id="CHEBI:15377"/>
        <dbReference type="ChEBI" id="CHEBI:15378"/>
        <dbReference type="ChEBI" id="CHEBI:37565"/>
        <dbReference type="ChEBI" id="CHEBI:43474"/>
        <dbReference type="ChEBI" id="CHEBI:58189"/>
    </reaction>
    <physiologicalReaction direction="left-to-right" evidence="2">
        <dbReference type="Rhea" id="RHEA:19670"/>
    </physiologicalReaction>
</comment>
<comment type="cofactor">
    <cofactor evidence="2">
        <name>Mg(2+)</name>
        <dbReference type="ChEBI" id="CHEBI:18420"/>
    </cofactor>
</comment>
<comment type="subunit">
    <text evidence="8 9 10">Dimer of alpha and beta chains (PubMed:2207090, PubMed:6504138, PubMed:7704569). A typical microtubule is a hollow water-filled tube with an outer diameter of 25 nm and an inner diameter of 15 nM. Alpha-beta heterodimers associate head-to-tail to form protofilaments running lengthwise along the microtubule wall with the beta-tubulin subunit facing the microtubule plus end conferring a structural polarity. Microtubules usually have 13 protofilaments but different protofilament numbers can be found in some organisms and specialized cells.</text>
</comment>
<comment type="subcellular location">
    <subcellularLocation>
        <location evidence="8 9 10">Cytoplasm</location>
        <location evidence="8 9 10">Cytoskeleton</location>
    </subcellularLocation>
</comment>
<comment type="domain">
    <text evidence="2">The MREC motif may be critical for tubulin autoregulation.</text>
</comment>
<comment type="PTM">
    <text evidence="4">Some glutamate residues at the C-terminus are polyglycylated, resulting in polyglycine chains on the gamma-carboxyl group. Glycylation is mainly limited to tubulin incorporated into axonemes (cilia and flagella) whereas glutamylation is prevalent in neuronal cells, centrioles, axonemes, and the mitotic spindle. Both modifications can coexist on the same protein on adjacent residues, and lowering polyglycylation levels increases polyglutamylation, and reciprocally. Cilia and flagella glycylation is required for their stability and maintenance. Flagella glycylation controls sperm motility.</text>
</comment>
<comment type="PTM">
    <text evidence="4 5">Some glutamate residues at the C-terminus are polyglutamylated, resulting in polyglutamate chains on the gamma-carboxyl group (By similarity). Polyglutamylation plays a key role in microtubule severing by spastin (SPAST). SPAST preferentially recognizes and acts on microtubules decorated with short polyglutamate tails: severing activity by SPAST increases as the number of glutamates per tubulin rises from one to eight, but decreases beyond this glutamylation threshold (By similarity). Glutamylation is also involved in cilia motility (By similarity).</text>
</comment>
<comment type="PTM">
    <text evidence="5">Acetylation of alpha chains at Lys-40 is located inside the microtubule lumen. This modification has been correlated with increased microtubule stability, intracellular transport and ciliary assembly.</text>
</comment>
<comment type="PTM">
    <text evidence="2">Methylation of alpha chains at Lys-40 is found in mitotic microtubules and is required for normal mitosis and cytokinesis contributing to genomic stability.</text>
</comment>
<comment type="PTM">
    <text evidence="5">Nitration of Tyr-449 is irreversible and interferes with normal dynein intracellular distribution.</text>
</comment>
<comment type="PTM">
    <text evidence="3 5">Undergoes a tyrosination/detyrosination cycle, the cyclic removal and re-addition of a C-terminal tyrosine residue by the enzymes tubulin tyrosine carboxypeptidase (MATCAP1, VASH1 or VASH2) and tubulin tyrosine ligase (TTL), respectively.</text>
</comment>
<comment type="PTM">
    <molecule>Tubulin alpha-1C chain</molecule>
    <text evidence="3 5">Tyrosination promotes microtubule interaction with CAP-Gly domain-containing proteins such as CLIP1, CLIP2 and DCTN1 (By similarity). Tyrosination regulates the initiation of dynein-dynactin motility via interaction with DCTN1, which brings the dynein-dynactin complex into contact with microtubules. In neurons, tyrosinated tubulins mediate the initiation of retrograde vesicle transport (By similarity).</text>
</comment>
<comment type="PTM">
    <molecule>Detyrosinated tubulin alpha-1C chain</molecule>
    <text evidence="4 6">Detyrosination is involved in metaphase plate congression by guiding chromosomes during mitosis: detyrosination promotes interaction with CENPE, promoting pole-proximal transport of chromosomes toward the equator (By similarity). Detyrosination increases microtubules-dependent mechanotransduction in dystrophic cardiac and skeletal muscle. In cardiomyocytes, detyrosinated microtubules are required to resist to contractile compression during contraction: detyrosination promotes association with desmin (DES) at force-generating sarcomeres, leading to buckled microtubules and mechanical resistance to contraction (By similarity).</text>
</comment>
<comment type="similarity">
    <text evidence="11">Belongs to the tubulin family.</text>
</comment>
<dbReference type="EC" id="3.6.5.-" evidence="2"/>
<dbReference type="EMBL" id="BC102116">
    <property type="protein sequence ID" value="AAI02117.1"/>
    <property type="molecule type" value="mRNA"/>
</dbReference>
<dbReference type="RefSeq" id="NP_001029376.1">
    <property type="nucleotide sequence ID" value="NM_001034204.1"/>
</dbReference>
<dbReference type="PDB" id="3DU7">
    <property type="method" value="X-ray"/>
    <property type="resolution" value="4.10 A"/>
    <property type="chains" value="A/C=1-449"/>
</dbReference>
<dbReference type="PDB" id="3E22">
    <property type="method" value="X-ray"/>
    <property type="resolution" value="3.80 A"/>
    <property type="chains" value="A/C=1-449"/>
</dbReference>
<dbReference type="PDBsum" id="3DU7"/>
<dbReference type="PDBsum" id="3E22"/>
<dbReference type="SMR" id="Q3ZCJ7"/>
<dbReference type="BioGRID" id="160894">
    <property type="interactions" value="3"/>
</dbReference>
<dbReference type="FunCoup" id="Q3ZCJ7">
    <property type="interactions" value="1039"/>
</dbReference>
<dbReference type="STRING" id="9913.ENSBTAP00000038184"/>
<dbReference type="PaxDb" id="9913-ENSBTAP00000038184"/>
<dbReference type="PeptideAtlas" id="Q3ZCJ7"/>
<dbReference type="GeneID" id="504244"/>
<dbReference type="KEGG" id="bta:504244"/>
<dbReference type="CTD" id="84790"/>
<dbReference type="VEuPathDB" id="HostDB:ENSBTAG00000039992"/>
<dbReference type="eggNOG" id="KOG1376">
    <property type="taxonomic scope" value="Eukaryota"/>
</dbReference>
<dbReference type="HOGENOM" id="CLU_015718_0_0_1"/>
<dbReference type="InParanoid" id="Q3ZCJ7"/>
<dbReference type="OMA" id="PEGTHIN"/>
<dbReference type="OrthoDB" id="1844at2759"/>
<dbReference type="TreeFam" id="TF300314"/>
<dbReference type="Reactome" id="R-BTA-190840">
    <property type="pathway name" value="Microtubule-dependent trafficking of connexons from Golgi to the plasma membrane"/>
</dbReference>
<dbReference type="Reactome" id="R-BTA-2132295">
    <property type="pathway name" value="MHC class II antigen presentation"/>
</dbReference>
<dbReference type="Reactome" id="R-BTA-2467813">
    <property type="pathway name" value="Separation of Sister Chromatids"/>
</dbReference>
<dbReference type="Reactome" id="R-BTA-2500257">
    <property type="pathway name" value="Resolution of Sister Chromatid Cohesion"/>
</dbReference>
<dbReference type="Reactome" id="R-BTA-3371497">
    <property type="pathway name" value="HSP90 chaperone cycle for steroid hormone receptors (SHR) in the presence of ligand"/>
</dbReference>
<dbReference type="Reactome" id="R-BTA-380320">
    <property type="pathway name" value="Recruitment of NuMA to mitotic centrosomes"/>
</dbReference>
<dbReference type="Reactome" id="R-BTA-5610787">
    <property type="pathway name" value="Hedgehog 'off' state"/>
</dbReference>
<dbReference type="Reactome" id="R-BTA-5617833">
    <property type="pathway name" value="Cilium Assembly"/>
</dbReference>
<dbReference type="Reactome" id="R-BTA-5620924">
    <property type="pathway name" value="Intraflagellar transport"/>
</dbReference>
<dbReference type="Reactome" id="R-BTA-5626467">
    <property type="pathway name" value="RHO GTPases activate IQGAPs"/>
</dbReference>
<dbReference type="Reactome" id="R-BTA-5663220">
    <property type="pathway name" value="RHO GTPases Activate Formins"/>
</dbReference>
<dbReference type="Reactome" id="R-BTA-6807878">
    <property type="pathway name" value="COPI-mediated anterograde transport"/>
</dbReference>
<dbReference type="Reactome" id="R-BTA-6811434">
    <property type="pathway name" value="COPI-dependent Golgi-to-ER retrograde traffic"/>
</dbReference>
<dbReference type="Reactome" id="R-BTA-6811436">
    <property type="pathway name" value="COPI-independent Golgi-to-ER retrograde traffic"/>
</dbReference>
<dbReference type="Reactome" id="R-BTA-68877">
    <property type="pathway name" value="Mitotic Prometaphase"/>
</dbReference>
<dbReference type="Reactome" id="R-BTA-8852276">
    <property type="pathway name" value="The role of GTSE1 in G2/M progression after G2 checkpoint"/>
</dbReference>
<dbReference type="Reactome" id="R-BTA-8955332">
    <property type="pathway name" value="Carboxyterminal post-translational modifications of tubulin"/>
</dbReference>
<dbReference type="Reactome" id="R-BTA-9646399">
    <property type="pathway name" value="Aggrephagy"/>
</dbReference>
<dbReference type="Reactome" id="R-BTA-9648025">
    <property type="pathway name" value="EML4 and NUDC in mitotic spindle formation"/>
</dbReference>
<dbReference type="Reactome" id="R-BTA-9668328">
    <property type="pathway name" value="Sealing of the nuclear envelope (NE) by ESCRT-III"/>
</dbReference>
<dbReference type="Reactome" id="R-BTA-983189">
    <property type="pathway name" value="Kinesins"/>
</dbReference>
<dbReference type="EvolutionaryTrace" id="Q3ZCJ7"/>
<dbReference type="Proteomes" id="UP000009136">
    <property type="component" value="Chromosome 5"/>
</dbReference>
<dbReference type="Bgee" id="ENSBTAG00000039992">
    <property type="expression patterns" value="Expressed in diaphragm and 104 other cell types or tissues"/>
</dbReference>
<dbReference type="GO" id="GO:0005737">
    <property type="term" value="C:cytoplasm"/>
    <property type="evidence" value="ECO:0000318"/>
    <property type="project" value="GO_Central"/>
</dbReference>
<dbReference type="GO" id="GO:0005874">
    <property type="term" value="C:microtubule"/>
    <property type="evidence" value="ECO:0000318"/>
    <property type="project" value="GO_Central"/>
</dbReference>
<dbReference type="GO" id="GO:0005525">
    <property type="term" value="F:GTP binding"/>
    <property type="evidence" value="ECO:0000318"/>
    <property type="project" value="GO_Central"/>
</dbReference>
<dbReference type="GO" id="GO:0016787">
    <property type="term" value="F:hydrolase activity"/>
    <property type="evidence" value="ECO:0007669"/>
    <property type="project" value="UniProtKB-KW"/>
</dbReference>
<dbReference type="GO" id="GO:0046872">
    <property type="term" value="F:metal ion binding"/>
    <property type="evidence" value="ECO:0007669"/>
    <property type="project" value="UniProtKB-KW"/>
</dbReference>
<dbReference type="GO" id="GO:0005200">
    <property type="term" value="F:structural constituent of cytoskeleton"/>
    <property type="evidence" value="ECO:0000318"/>
    <property type="project" value="GO_Central"/>
</dbReference>
<dbReference type="GO" id="GO:0000226">
    <property type="term" value="P:microtubule cytoskeleton organization"/>
    <property type="evidence" value="ECO:0000318"/>
    <property type="project" value="GO_Central"/>
</dbReference>
<dbReference type="GO" id="GO:0000278">
    <property type="term" value="P:mitotic cell cycle"/>
    <property type="evidence" value="ECO:0000318"/>
    <property type="project" value="GO_Central"/>
</dbReference>
<dbReference type="CDD" id="cd02186">
    <property type="entry name" value="alpha_tubulin"/>
    <property type="match status" value="1"/>
</dbReference>
<dbReference type="FunFam" id="1.10.287.600:FF:000005">
    <property type="entry name" value="Tubulin alpha chain"/>
    <property type="match status" value="1"/>
</dbReference>
<dbReference type="FunFam" id="3.30.1330.20:FF:000001">
    <property type="entry name" value="Tubulin alpha chain"/>
    <property type="match status" value="1"/>
</dbReference>
<dbReference type="FunFam" id="3.40.50.1440:FF:000002">
    <property type="entry name" value="Tubulin alpha chain"/>
    <property type="match status" value="1"/>
</dbReference>
<dbReference type="Gene3D" id="1.10.287.600">
    <property type="entry name" value="Helix hairpin bin"/>
    <property type="match status" value="1"/>
</dbReference>
<dbReference type="Gene3D" id="3.30.1330.20">
    <property type="entry name" value="Tubulin/FtsZ, C-terminal domain"/>
    <property type="match status" value="1"/>
</dbReference>
<dbReference type="Gene3D" id="3.40.50.1440">
    <property type="entry name" value="Tubulin/FtsZ, GTPase domain"/>
    <property type="match status" value="1"/>
</dbReference>
<dbReference type="InterPro" id="IPR002452">
    <property type="entry name" value="Alpha_tubulin"/>
</dbReference>
<dbReference type="InterPro" id="IPR008280">
    <property type="entry name" value="Tub_FtsZ_C"/>
</dbReference>
<dbReference type="InterPro" id="IPR000217">
    <property type="entry name" value="Tubulin"/>
</dbReference>
<dbReference type="InterPro" id="IPR037103">
    <property type="entry name" value="Tubulin/FtsZ-like_C"/>
</dbReference>
<dbReference type="InterPro" id="IPR018316">
    <property type="entry name" value="Tubulin/FtsZ_2-layer-sand-dom"/>
</dbReference>
<dbReference type="InterPro" id="IPR036525">
    <property type="entry name" value="Tubulin/FtsZ_GTPase_sf"/>
</dbReference>
<dbReference type="InterPro" id="IPR023123">
    <property type="entry name" value="Tubulin_C"/>
</dbReference>
<dbReference type="InterPro" id="IPR017975">
    <property type="entry name" value="Tubulin_CS"/>
</dbReference>
<dbReference type="InterPro" id="IPR003008">
    <property type="entry name" value="Tubulin_FtsZ_GTPase"/>
</dbReference>
<dbReference type="PANTHER" id="PTHR11588">
    <property type="entry name" value="TUBULIN"/>
    <property type="match status" value="1"/>
</dbReference>
<dbReference type="Pfam" id="PF00091">
    <property type="entry name" value="Tubulin"/>
    <property type="match status" value="1"/>
</dbReference>
<dbReference type="Pfam" id="PF03953">
    <property type="entry name" value="Tubulin_C"/>
    <property type="match status" value="1"/>
</dbReference>
<dbReference type="PRINTS" id="PR01162">
    <property type="entry name" value="ALPHATUBULIN"/>
</dbReference>
<dbReference type="PRINTS" id="PR01161">
    <property type="entry name" value="TUBULIN"/>
</dbReference>
<dbReference type="SMART" id="SM00864">
    <property type="entry name" value="Tubulin"/>
    <property type="match status" value="1"/>
</dbReference>
<dbReference type="SMART" id="SM00865">
    <property type="entry name" value="Tubulin_C"/>
    <property type="match status" value="1"/>
</dbReference>
<dbReference type="SUPFAM" id="SSF55307">
    <property type="entry name" value="Tubulin C-terminal domain-like"/>
    <property type="match status" value="1"/>
</dbReference>
<dbReference type="SUPFAM" id="SSF52490">
    <property type="entry name" value="Tubulin nucleotide-binding domain-like"/>
    <property type="match status" value="1"/>
</dbReference>
<dbReference type="PROSITE" id="PS00227">
    <property type="entry name" value="TUBULIN"/>
    <property type="match status" value="1"/>
</dbReference>
<proteinExistence type="evidence at protein level"/>
<sequence>MRECISIHVGQAGVQIGNACWELYCLEHGIQPDGQMPSDKTIGGGDDSFNTFFSETGAGKHVPRAVFVDLEPTVIDEVRTGTYRQLFHPEQLISGKEDAANNYARGHYTIGKEIIDLVLDRVRKLADQCTGLQGFLVFHSFGGGTGSGFTSLLMERLSVDYGKKSKLEFSIYPAPQVSTAVVEPYNSILTTHTTLEHSDCAFMVDNEAIYDICRRNLDIERPTYTNLNRLMSQIVSSITASLRFDGALNVDLTEFQTNLVPYPRIHFPLATYAPVISAEKAYHEQLSVAEITNACFEPANQMVKCDPRHGKYMACCLLYRGDVVPKDVNAAIATIKTKRTIQFVDWCPTGFKVGINYQPPTVVPGGDLAKVQRAVCMLSNTTAVAEAWARLDHKFDLMYAKRAFVHWYVGEGMEEGEFSEAREDMAALEKDYEEVGADSAEGDDEGDEY</sequence>